<reference key="1">
    <citation type="journal article" date="2006" name="Genome Biol.">
        <title>The genome of Rhizobium leguminosarum has recognizable core and accessory components.</title>
        <authorList>
            <person name="Young J.P.W."/>
            <person name="Crossman L.C."/>
            <person name="Johnston A.W.B."/>
            <person name="Thomson N.R."/>
            <person name="Ghazoui Z.F."/>
            <person name="Hull K.H."/>
            <person name="Wexler M."/>
            <person name="Curson A.R.J."/>
            <person name="Todd J.D."/>
            <person name="Poole P.S."/>
            <person name="Mauchline T.H."/>
            <person name="East A.K."/>
            <person name="Quail M.A."/>
            <person name="Churcher C."/>
            <person name="Arrowsmith C."/>
            <person name="Cherevach I."/>
            <person name="Chillingworth T."/>
            <person name="Clarke K."/>
            <person name="Cronin A."/>
            <person name="Davis P."/>
            <person name="Fraser A."/>
            <person name="Hance Z."/>
            <person name="Hauser H."/>
            <person name="Jagels K."/>
            <person name="Moule S."/>
            <person name="Mungall K."/>
            <person name="Norbertczak H."/>
            <person name="Rabbinowitsch E."/>
            <person name="Sanders M."/>
            <person name="Simmonds M."/>
            <person name="Whitehead S."/>
            <person name="Parkhill J."/>
        </authorList>
    </citation>
    <scope>NUCLEOTIDE SEQUENCE [LARGE SCALE GENOMIC DNA]</scope>
    <source>
        <strain>DSM 114642 / LMG 32736 / 3841</strain>
    </source>
</reference>
<name>ASSY1_RHIJ3</name>
<keyword id="KW-0028">Amino-acid biosynthesis</keyword>
<keyword id="KW-0055">Arginine biosynthesis</keyword>
<keyword id="KW-0067">ATP-binding</keyword>
<keyword id="KW-0963">Cytoplasm</keyword>
<keyword id="KW-0436">Ligase</keyword>
<keyword id="KW-0547">Nucleotide-binding</keyword>
<organism>
    <name type="scientific">Rhizobium johnstonii (strain DSM 114642 / LMG 32736 / 3841)</name>
    <name type="common">Rhizobium leguminosarum bv. viciae</name>
    <dbReference type="NCBI Taxonomy" id="216596"/>
    <lineage>
        <taxon>Bacteria</taxon>
        <taxon>Pseudomonadati</taxon>
        <taxon>Pseudomonadota</taxon>
        <taxon>Alphaproteobacteria</taxon>
        <taxon>Hyphomicrobiales</taxon>
        <taxon>Rhizobiaceae</taxon>
        <taxon>Rhizobium/Agrobacterium group</taxon>
        <taxon>Rhizobium</taxon>
        <taxon>Rhizobium johnstonii</taxon>
    </lineage>
</organism>
<sequence>MTKIEKIVLSYSGGLDTSIILKWLQETYGCEVVTFTADLGQGEELEPARAKAEMSGVKDIRIVDLREEFVSDFVFPMLRANALYEGQYLLGSSIARPLIAKHLVGIAREVGADAVAHGATGKGNDQIRFELAVNALDPSIKVIAPWRQWNIRSRLQLSEYAEKHRIPVPSDKRGEAPFSIDANLLHTSTEGKSLENPAEVAPDHVYQRTVDPVDAPDTPEIITVGFERGDPVSVNGKAMTPAALLTELNGLGGRHGVGRLDLVENRFIGMKSRGIYETPGGTILLAAHRGIESITLDRAAAHLKDEIMPRYAELIYNGFWFAPEREMLQALIDHSQAFVSGEVTLRLYKGSASVISRASPCSLYSADLVTFEESTIAFDHHDAEGFIRLNGLRLRSWAARNGR</sequence>
<proteinExistence type="inferred from homology"/>
<feature type="chain" id="PRO_0000263961" description="Argininosuccinate synthase 1">
    <location>
        <begin position="1"/>
        <end position="403"/>
    </location>
</feature>
<feature type="binding site" evidence="1">
    <location>
        <begin position="10"/>
        <end position="18"/>
    </location>
    <ligand>
        <name>ATP</name>
        <dbReference type="ChEBI" id="CHEBI:30616"/>
    </ligand>
</feature>
<feature type="binding site" evidence="1">
    <location>
        <position position="37"/>
    </location>
    <ligand>
        <name>ATP</name>
        <dbReference type="ChEBI" id="CHEBI:30616"/>
    </ligand>
</feature>
<feature type="binding site" evidence="1">
    <location>
        <position position="88"/>
    </location>
    <ligand>
        <name>L-citrulline</name>
        <dbReference type="ChEBI" id="CHEBI:57743"/>
    </ligand>
</feature>
<feature type="binding site" evidence="1">
    <location>
        <position position="93"/>
    </location>
    <ligand>
        <name>L-citrulline</name>
        <dbReference type="ChEBI" id="CHEBI:57743"/>
    </ligand>
</feature>
<feature type="binding site" evidence="1">
    <location>
        <position position="118"/>
    </location>
    <ligand>
        <name>ATP</name>
        <dbReference type="ChEBI" id="CHEBI:30616"/>
    </ligand>
</feature>
<feature type="binding site" evidence="1">
    <location>
        <position position="120"/>
    </location>
    <ligand>
        <name>L-aspartate</name>
        <dbReference type="ChEBI" id="CHEBI:29991"/>
    </ligand>
</feature>
<feature type="binding site" evidence="1">
    <location>
        <position position="124"/>
    </location>
    <ligand>
        <name>L-aspartate</name>
        <dbReference type="ChEBI" id="CHEBI:29991"/>
    </ligand>
</feature>
<feature type="binding site" evidence="1">
    <location>
        <position position="124"/>
    </location>
    <ligand>
        <name>L-citrulline</name>
        <dbReference type="ChEBI" id="CHEBI:57743"/>
    </ligand>
</feature>
<feature type="binding site" evidence="1">
    <location>
        <position position="125"/>
    </location>
    <ligand>
        <name>L-aspartate</name>
        <dbReference type="ChEBI" id="CHEBI:29991"/>
    </ligand>
</feature>
<feature type="binding site" evidence="1">
    <location>
        <position position="128"/>
    </location>
    <ligand>
        <name>L-citrulline</name>
        <dbReference type="ChEBI" id="CHEBI:57743"/>
    </ligand>
</feature>
<feature type="binding site" evidence="1">
    <location>
        <position position="179"/>
    </location>
    <ligand>
        <name>L-citrulline</name>
        <dbReference type="ChEBI" id="CHEBI:57743"/>
    </ligand>
</feature>
<feature type="binding site" evidence="1">
    <location>
        <position position="188"/>
    </location>
    <ligand>
        <name>L-citrulline</name>
        <dbReference type="ChEBI" id="CHEBI:57743"/>
    </ligand>
</feature>
<feature type="binding site" evidence="1">
    <location>
        <position position="264"/>
    </location>
    <ligand>
        <name>L-citrulline</name>
        <dbReference type="ChEBI" id="CHEBI:57743"/>
    </ligand>
</feature>
<feature type="binding site" evidence="1">
    <location>
        <position position="276"/>
    </location>
    <ligand>
        <name>L-citrulline</name>
        <dbReference type="ChEBI" id="CHEBI:57743"/>
    </ligand>
</feature>
<dbReference type="EC" id="6.3.4.5" evidence="1"/>
<dbReference type="EMBL" id="AM236080">
    <property type="protein sequence ID" value="CAK08476.1"/>
    <property type="molecule type" value="Genomic_DNA"/>
</dbReference>
<dbReference type="RefSeq" id="WP_011652504.1">
    <property type="nucleotide sequence ID" value="NC_008380.1"/>
</dbReference>
<dbReference type="SMR" id="Q1MEZ8"/>
<dbReference type="EnsemblBacteria" id="CAK08476">
    <property type="protein sequence ID" value="CAK08476"/>
    <property type="gene ID" value="RL2987"/>
</dbReference>
<dbReference type="KEGG" id="rle:RL2987"/>
<dbReference type="eggNOG" id="COG0137">
    <property type="taxonomic scope" value="Bacteria"/>
</dbReference>
<dbReference type="HOGENOM" id="CLU_032784_4_2_5"/>
<dbReference type="UniPathway" id="UPA00068">
    <property type="reaction ID" value="UER00113"/>
</dbReference>
<dbReference type="Proteomes" id="UP000006575">
    <property type="component" value="Chromosome"/>
</dbReference>
<dbReference type="GO" id="GO:0005737">
    <property type="term" value="C:cytoplasm"/>
    <property type="evidence" value="ECO:0007669"/>
    <property type="project" value="UniProtKB-SubCell"/>
</dbReference>
<dbReference type="GO" id="GO:0004055">
    <property type="term" value="F:argininosuccinate synthase activity"/>
    <property type="evidence" value="ECO:0007669"/>
    <property type="project" value="UniProtKB-UniRule"/>
</dbReference>
<dbReference type="GO" id="GO:0005524">
    <property type="term" value="F:ATP binding"/>
    <property type="evidence" value="ECO:0007669"/>
    <property type="project" value="UniProtKB-UniRule"/>
</dbReference>
<dbReference type="GO" id="GO:0000053">
    <property type="term" value="P:argininosuccinate metabolic process"/>
    <property type="evidence" value="ECO:0007669"/>
    <property type="project" value="TreeGrafter"/>
</dbReference>
<dbReference type="GO" id="GO:0006526">
    <property type="term" value="P:L-arginine biosynthetic process"/>
    <property type="evidence" value="ECO:0007669"/>
    <property type="project" value="UniProtKB-UniRule"/>
</dbReference>
<dbReference type="GO" id="GO:0000050">
    <property type="term" value="P:urea cycle"/>
    <property type="evidence" value="ECO:0007669"/>
    <property type="project" value="TreeGrafter"/>
</dbReference>
<dbReference type="CDD" id="cd01999">
    <property type="entry name" value="ASS"/>
    <property type="match status" value="1"/>
</dbReference>
<dbReference type="FunFam" id="3.40.50.620:FF:000019">
    <property type="entry name" value="Argininosuccinate synthase"/>
    <property type="match status" value="1"/>
</dbReference>
<dbReference type="FunFam" id="3.90.1260.10:FF:000007">
    <property type="entry name" value="Argininosuccinate synthase"/>
    <property type="match status" value="1"/>
</dbReference>
<dbReference type="Gene3D" id="3.90.1260.10">
    <property type="entry name" value="Argininosuccinate synthetase, chain A, domain 2"/>
    <property type="match status" value="1"/>
</dbReference>
<dbReference type="Gene3D" id="3.40.50.620">
    <property type="entry name" value="HUPs"/>
    <property type="match status" value="1"/>
</dbReference>
<dbReference type="Gene3D" id="1.20.5.470">
    <property type="entry name" value="Single helix bin"/>
    <property type="match status" value="1"/>
</dbReference>
<dbReference type="HAMAP" id="MF_00005">
    <property type="entry name" value="Arg_succ_synth_type1"/>
    <property type="match status" value="1"/>
</dbReference>
<dbReference type="InterPro" id="IPR048268">
    <property type="entry name" value="Arginosuc_syn_C"/>
</dbReference>
<dbReference type="InterPro" id="IPR048267">
    <property type="entry name" value="Arginosuc_syn_N"/>
</dbReference>
<dbReference type="InterPro" id="IPR001518">
    <property type="entry name" value="Arginosuc_synth"/>
</dbReference>
<dbReference type="InterPro" id="IPR018223">
    <property type="entry name" value="Arginosuc_synth_CS"/>
</dbReference>
<dbReference type="InterPro" id="IPR023434">
    <property type="entry name" value="Arginosuc_synth_type_1_subfam"/>
</dbReference>
<dbReference type="InterPro" id="IPR024074">
    <property type="entry name" value="AS_cat/multimer_dom_body"/>
</dbReference>
<dbReference type="InterPro" id="IPR014729">
    <property type="entry name" value="Rossmann-like_a/b/a_fold"/>
</dbReference>
<dbReference type="NCBIfam" id="TIGR00032">
    <property type="entry name" value="argG"/>
    <property type="match status" value="1"/>
</dbReference>
<dbReference type="NCBIfam" id="NF001770">
    <property type="entry name" value="PRK00509.1"/>
    <property type="match status" value="1"/>
</dbReference>
<dbReference type="PANTHER" id="PTHR11587">
    <property type="entry name" value="ARGININOSUCCINATE SYNTHASE"/>
    <property type="match status" value="1"/>
</dbReference>
<dbReference type="PANTHER" id="PTHR11587:SF2">
    <property type="entry name" value="ARGININOSUCCINATE SYNTHASE"/>
    <property type="match status" value="1"/>
</dbReference>
<dbReference type="Pfam" id="PF20979">
    <property type="entry name" value="Arginosuc_syn_C"/>
    <property type="match status" value="1"/>
</dbReference>
<dbReference type="Pfam" id="PF00764">
    <property type="entry name" value="Arginosuc_synth"/>
    <property type="match status" value="1"/>
</dbReference>
<dbReference type="SUPFAM" id="SSF52402">
    <property type="entry name" value="Adenine nucleotide alpha hydrolases-like"/>
    <property type="match status" value="1"/>
</dbReference>
<dbReference type="SUPFAM" id="SSF69864">
    <property type="entry name" value="Argininosuccinate synthetase, C-terminal domain"/>
    <property type="match status" value="1"/>
</dbReference>
<dbReference type="PROSITE" id="PS00564">
    <property type="entry name" value="ARGININOSUCCIN_SYN_1"/>
    <property type="match status" value="1"/>
</dbReference>
<dbReference type="PROSITE" id="PS00565">
    <property type="entry name" value="ARGININOSUCCIN_SYN_2"/>
    <property type="match status" value="1"/>
</dbReference>
<comment type="catalytic activity">
    <reaction evidence="1">
        <text>L-citrulline + L-aspartate + ATP = 2-(N(omega)-L-arginino)succinate + AMP + diphosphate + H(+)</text>
        <dbReference type="Rhea" id="RHEA:10932"/>
        <dbReference type="ChEBI" id="CHEBI:15378"/>
        <dbReference type="ChEBI" id="CHEBI:29991"/>
        <dbReference type="ChEBI" id="CHEBI:30616"/>
        <dbReference type="ChEBI" id="CHEBI:33019"/>
        <dbReference type="ChEBI" id="CHEBI:57472"/>
        <dbReference type="ChEBI" id="CHEBI:57743"/>
        <dbReference type="ChEBI" id="CHEBI:456215"/>
        <dbReference type="EC" id="6.3.4.5"/>
    </reaction>
</comment>
<comment type="pathway">
    <text evidence="1">Amino-acid biosynthesis; L-arginine biosynthesis; L-arginine from L-ornithine and carbamoyl phosphate: step 2/3.</text>
</comment>
<comment type="subunit">
    <text evidence="1">Homotetramer.</text>
</comment>
<comment type="subcellular location">
    <subcellularLocation>
        <location evidence="1">Cytoplasm</location>
    </subcellularLocation>
</comment>
<comment type="similarity">
    <text evidence="1">Belongs to the argininosuccinate synthase family. Type 1 subfamily.</text>
</comment>
<protein>
    <recommendedName>
        <fullName evidence="1">Argininosuccinate synthase 1</fullName>
        <ecNumber evidence="1">6.3.4.5</ecNumber>
    </recommendedName>
    <alternativeName>
        <fullName evidence="1">Citrulline--aspartate ligase 1</fullName>
    </alternativeName>
</protein>
<gene>
    <name evidence="1" type="primary">argG1</name>
    <name type="ordered locus">RL2987</name>
</gene>
<accession>Q1MEZ8</accession>
<evidence type="ECO:0000255" key="1">
    <source>
        <dbReference type="HAMAP-Rule" id="MF_00005"/>
    </source>
</evidence>